<organism>
    <name type="scientific">Clostridium novyi (strain NT)</name>
    <dbReference type="NCBI Taxonomy" id="386415"/>
    <lineage>
        <taxon>Bacteria</taxon>
        <taxon>Bacillati</taxon>
        <taxon>Bacillota</taxon>
        <taxon>Clostridia</taxon>
        <taxon>Eubacteriales</taxon>
        <taxon>Clostridiaceae</taxon>
        <taxon>Clostridium</taxon>
    </lineage>
</organism>
<protein>
    <recommendedName>
        <fullName evidence="1">Cobyric acid synthase</fullName>
    </recommendedName>
</protein>
<feature type="chain" id="PRO_1000002352" description="Cobyric acid synthase">
    <location>
        <begin position="1"/>
        <end position="505"/>
    </location>
</feature>
<feature type="domain" description="GATase cobBQ-type" evidence="1">
    <location>
        <begin position="251"/>
        <end position="444"/>
    </location>
</feature>
<feature type="active site" description="Nucleophile" evidence="1">
    <location>
        <position position="332"/>
    </location>
</feature>
<feature type="active site" evidence="1">
    <location>
        <position position="436"/>
    </location>
</feature>
<evidence type="ECO:0000255" key="1">
    <source>
        <dbReference type="HAMAP-Rule" id="MF_00028"/>
    </source>
</evidence>
<name>COBQ_CLONN</name>
<reference key="1">
    <citation type="journal article" date="2006" name="Nat. Biotechnol.">
        <title>The genome and transcriptomes of the anti-tumor agent Clostridium novyi-NT.</title>
        <authorList>
            <person name="Bettegowda C."/>
            <person name="Huang X."/>
            <person name="Lin J."/>
            <person name="Cheong I."/>
            <person name="Kohli M."/>
            <person name="Szabo S.A."/>
            <person name="Zhang X."/>
            <person name="Diaz L.A. Jr."/>
            <person name="Velculescu V.E."/>
            <person name="Parmigiani G."/>
            <person name="Kinzler K.W."/>
            <person name="Vogelstein B."/>
            <person name="Zhou S."/>
        </authorList>
    </citation>
    <scope>NUCLEOTIDE SEQUENCE [LARGE SCALE GENOMIC DNA]</scope>
    <source>
        <strain>NT</strain>
    </source>
</reference>
<proteinExistence type="inferred from homology"/>
<keyword id="KW-0169">Cobalamin biosynthesis</keyword>
<keyword id="KW-0315">Glutamine amidotransferase</keyword>
<keyword id="KW-1185">Reference proteome</keyword>
<dbReference type="EMBL" id="CP000382">
    <property type="protein sequence ID" value="ABK61961.1"/>
    <property type="molecule type" value="Genomic_DNA"/>
</dbReference>
<dbReference type="RefSeq" id="WP_011722154.1">
    <property type="nucleotide sequence ID" value="NC_008593.1"/>
</dbReference>
<dbReference type="SMR" id="A0Q0K2"/>
<dbReference type="STRING" id="386415.NT01CX_2081"/>
<dbReference type="KEGG" id="cno:NT01CX_2081"/>
<dbReference type="PATRIC" id="fig|386415.7.peg.1186"/>
<dbReference type="eggNOG" id="COG1492">
    <property type="taxonomic scope" value="Bacteria"/>
</dbReference>
<dbReference type="HOGENOM" id="CLU_019250_2_2_9"/>
<dbReference type="UniPathway" id="UPA00148"/>
<dbReference type="Proteomes" id="UP000008220">
    <property type="component" value="Chromosome"/>
</dbReference>
<dbReference type="GO" id="GO:0015420">
    <property type="term" value="F:ABC-type vitamin B12 transporter activity"/>
    <property type="evidence" value="ECO:0007669"/>
    <property type="project" value="UniProtKB-UniRule"/>
</dbReference>
<dbReference type="GO" id="GO:0003824">
    <property type="term" value="F:catalytic activity"/>
    <property type="evidence" value="ECO:0007669"/>
    <property type="project" value="InterPro"/>
</dbReference>
<dbReference type="GO" id="GO:0009236">
    <property type="term" value="P:cobalamin biosynthetic process"/>
    <property type="evidence" value="ECO:0007669"/>
    <property type="project" value="UniProtKB-UniRule"/>
</dbReference>
<dbReference type="CDD" id="cd05389">
    <property type="entry name" value="CobQ_N"/>
    <property type="match status" value="1"/>
</dbReference>
<dbReference type="CDD" id="cd01750">
    <property type="entry name" value="GATase1_CobQ"/>
    <property type="match status" value="1"/>
</dbReference>
<dbReference type="Gene3D" id="3.40.50.880">
    <property type="match status" value="1"/>
</dbReference>
<dbReference type="Gene3D" id="3.40.50.300">
    <property type="entry name" value="P-loop containing nucleotide triphosphate hydrolases"/>
    <property type="match status" value="1"/>
</dbReference>
<dbReference type="HAMAP" id="MF_00028">
    <property type="entry name" value="CobQ"/>
    <property type="match status" value="1"/>
</dbReference>
<dbReference type="InterPro" id="IPR029062">
    <property type="entry name" value="Class_I_gatase-like"/>
</dbReference>
<dbReference type="InterPro" id="IPR002586">
    <property type="entry name" value="CobQ/CobB/MinD/ParA_Nub-bd_dom"/>
</dbReference>
<dbReference type="InterPro" id="IPR033949">
    <property type="entry name" value="CobQ_GATase1"/>
</dbReference>
<dbReference type="InterPro" id="IPR047045">
    <property type="entry name" value="CobQ_N"/>
</dbReference>
<dbReference type="InterPro" id="IPR004459">
    <property type="entry name" value="CobQ_synth"/>
</dbReference>
<dbReference type="InterPro" id="IPR011698">
    <property type="entry name" value="GATase_3"/>
</dbReference>
<dbReference type="InterPro" id="IPR027417">
    <property type="entry name" value="P-loop_NTPase"/>
</dbReference>
<dbReference type="NCBIfam" id="TIGR00313">
    <property type="entry name" value="cobQ"/>
    <property type="match status" value="1"/>
</dbReference>
<dbReference type="NCBIfam" id="NF001989">
    <property type="entry name" value="PRK00784.1"/>
    <property type="match status" value="1"/>
</dbReference>
<dbReference type="PANTHER" id="PTHR21343:SF1">
    <property type="entry name" value="COBYRIC ACID SYNTHASE"/>
    <property type="match status" value="1"/>
</dbReference>
<dbReference type="PANTHER" id="PTHR21343">
    <property type="entry name" value="DETHIOBIOTIN SYNTHETASE"/>
    <property type="match status" value="1"/>
</dbReference>
<dbReference type="Pfam" id="PF01656">
    <property type="entry name" value="CbiA"/>
    <property type="match status" value="1"/>
</dbReference>
<dbReference type="Pfam" id="PF07685">
    <property type="entry name" value="GATase_3"/>
    <property type="match status" value="1"/>
</dbReference>
<dbReference type="SUPFAM" id="SSF52317">
    <property type="entry name" value="Class I glutamine amidotransferase-like"/>
    <property type="match status" value="1"/>
</dbReference>
<dbReference type="SUPFAM" id="SSF52540">
    <property type="entry name" value="P-loop containing nucleoside triphosphate hydrolases"/>
    <property type="match status" value="1"/>
</dbReference>
<dbReference type="PROSITE" id="PS51274">
    <property type="entry name" value="GATASE_COBBQ"/>
    <property type="match status" value="1"/>
</dbReference>
<gene>
    <name evidence="1" type="primary">cobQ</name>
    <name type="ordered locus">NT01CX_2081</name>
</gene>
<accession>A0Q0K2</accession>
<sequence length="505" mass="56501">MKSKSIMVQGTASSVGKSILCTGLCRVFYKDGYNVNPFKSQNMSLNSAITCDGGEIGRAQYMQAEASNKVPSVKMNPILLKPNSDRGSQVIINGKVFKNMDAVDYYKFKPQLKKDVSKIYNKLSDESDIIVIEGAGSPAEINLNKEDFVNMGMAKIAKSPVILVGDIDKGGVFASIVGTMMLLKEDERKMVRGVIINKFRGSYEILKPGLKMLEDIIKVPVLGVIPYFNLNLEDEDSATDWSKFNFNSKGDIDVAVIKLPHMSNFTDINPLKMYDDVSIRLIEKVEDLKNPNLIIIPGSKNTIKDMEYLKSSGMNSAILNCHSNGSFVFGICGGFQILGSKIKDPNNIESNITSIEGLNLINSVTEIKTDKTTTLTEARDKIFNCNIKGYEIHMGKTLIDDNNSNFLVINSRNEETCNDIDGAISKDKRVFGTYIHGIFDNSEFTRKFLNLIRKNAGMDEIKETPKDYWEFKNEEYDKLADIIRNNVDMKKLYEIVNEGIDETDN</sequence>
<comment type="function">
    <text evidence="1">Catalyzes amidations at positions B, D, E, and G on adenosylcobyrinic A,C-diamide. NH(2) groups are provided by glutamine, and one molecule of ATP is hydrogenolyzed for each amidation.</text>
</comment>
<comment type="pathway">
    <text evidence="1">Cofactor biosynthesis; adenosylcobalamin biosynthesis.</text>
</comment>
<comment type="similarity">
    <text evidence="1">Belongs to the CobB/CobQ family. CobQ subfamily.</text>
</comment>